<name>EFPL_VIBCH</name>
<feature type="chain" id="PRO_0000094389" description="Elongation factor P-like protein">
    <location>
        <begin position="1"/>
        <end position="188"/>
    </location>
</feature>
<evidence type="ECO:0000255" key="1">
    <source>
        <dbReference type="HAMAP-Rule" id="MF_00646"/>
    </source>
</evidence>
<evidence type="ECO:0000305" key="2"/>
<reference key="1">
    <citation type="journal article" date="2000" name="Nature">
        <title>DNA sequence of both chromosomes of the cholera pathogen Vibrio cholerae.</title>
        <authorList>
            <person name="Heidelberg J.F."/>
            <person name="Eisen J.A."/>
            <person name="Nelson W.C."/>
            <person name="Clayton R.A."/>
            <person name="Gwinn M.L."/>
            <person name="Dodson R.J."/>
            <person name="Haft D.H."/>
            <person name="Hickey E.K."/>
            <person name="Peterson J.D."/>
            <person name="Umayam L.A."/>
            <person name="Gill S.R."/>
            <person name="Nelson K.E."/>
            <person name="Read T.D."/>
            <person name="Tettelin H."/>
            <person name="Richardson D.L."/>
            <person name="Ermolaeva M.D."/>
            <person name="Vamathevan J.J."/>
            <person name="Bass S."/>
            <person name="Qin H."/>
            <person name="Dragoi I."/>
            <person name="Sellers P."/>
            <person name="McDonald L.A."/>
            <person name="Utterback T.R."/>
            <person name="Fleischmann R.D."/>
            <person name="Nierman W.C."/>
            <person name="White O."/>
            <person name="Salzberg S.L."/>
            <person name="Smith H.O."/>
            <person name="Colwell R.R."/>
            <person name="Mekalanos J.J."/>
            <person name="Venter J.C."/>
            <person name="Fraser C.M."/>
        </authorList>
    </citation>
    <scope>NUCLEOTIDE SEQUENCE [LARGE SCALE GENOMIC DNA]</scope>
    <source>
        <strain>ATCC 39315 / El Tor Inaba N16961</strain>
    </source>
</reference>
<keyword id="KW-1185">Reference proteome</keyword>
<organism>
    <name type="scientific">Vibrio cholerae serotype O1 (strain ATCC 39315 / El Tor Inaba N16961)</name>
    <dbReference type="NCBI Taxonomy" id="243277"/>
    <lineage>
        <taxon>Bacteria</taxon>
        <taxon>Pseudomonadati</taxon>
        <taxon>Pseudomonadota</taxon>
        <taxon>Gammaproteobacteria</taxon>
        <taxon>Vibrionales</taxon>
        <taxon>Vibrionaceae</taxon>
        <taxon>Vibrio</taxon>
    </lineage>
</organism>
<protein>
    <recommendedName>
        <fullName evidence="1">Elongation factor P-like protein</fullName>
    </recommendedName>
</protein>
<dbReference type="EMBL" id="AE003852">
    <property type="protein sequence ID" value="AAF94368.1"/>
    <property type="status" value="ALT_INIT"/>
    <property type="molecule type" value="Genomic_DNA"/>
</dbReference>
<dbReference type="PIR" id="D82229">
    <property type="entry name" value="D82229"/>
</dbReference>
<dbReference type="RefSeq" id="NP_230854.2">
    <property type="nucleotide sequence ID" value="NC_002505.1"/>
</dbReference>
<dbReference type="SMR" id="Q9KSP7"/>
<dbReference type="STRING" id="243277.VC_1209"/>
<dbReference type="DNASU" id="2614642"/>
<dbReference type="EnsemblBacteria" id="AAF94368">
    <property type="protein sequence ID" value="AAF94368"/>
    <property type="gene ID" value="VC_1209"/>
</dbReference>
<dbReference type="KEGG" id="vch:VC_1209"/>
<dbReference type="PATRIC" id="fig|243277.26.peg.1156"/>
<dbReference type="eggNOG" id="COG0231">
    <property type="taxonomic scope" value="Bacteria"/>
</dbReference>
<dbReference type="HOGENOM" id="CLU_074944_2_0_6"/>
<dbReference type="Proteomes" id="UP000000584">
    <property type="component" value="Chromosome 1"/>
</dbReference>
<dbReference type="GO" id="GO:0005737">
    <property type="term" value="C:cytoplasm"/>
    <property type="evidence" value="ECO:0000318"/>
    <property type="project" value="GO_Central"/>
</dbReference>
<dbReference type="GO" id="GO:0003746">
    <property type="term" value="F:translation elongation factor activity"/>
    <property type="evidence" value="ECO:0000318"/>
    <property type="project" value="GO_Central"/>
</dbReference>
<dbReference type="GO" id="GO:0043043">
    <property type="term" value="P:peptide biosynthetic process"/>
    <property type="evidence" value="ECO:0007669"/>
    <property type="project" value="InterPro"/>
</dbReference>
<dbReference type="CDD" id="cd04470">
    <property type="entry name" value="S1_EF-P_repeat_1"/>
    <property type="match status" value="1"/>
</dbReference>
<dbReference type="CDD" id="cd05794">
    <property type="entry name" value="S1_EF-P_repeat_2"/>
    <property type="match status" value="1"/>
</dbReference>
<dbReference type="FunFam" id="2.40.50.140:FF:000004">
    <property type="entry name" value="Elongation factor P"/>
    <property type="match status" value="1"/>
</dbReference>
<dbReference type="FunFam" id="2.30.30.30:FF:000011">
    <property type="entry name" value="Elongation factor P-like protein"/>
    <property type="match status" value="1"/>
</dbReference>
<dbReference type="Gene3D" id="2.30.30.30">
    <property type="match status" value="1"/>
</dbReference>
<dbReference type="Gene3D" id="2.40.50.140">
    <property type="entry name" value="Nucleic acid-binding proteins"/>
    <property type="match status" value="2"/>
</dbReference>
<dbReference type="HAMAP" id="MF_00646">
    <property type="entry name" value="EFP"/>
    <property type="match status" value="1"/>
</dbReference>
<dbReference type="InterPro" id="IPR015365">
    <property type="entry name" value="Elong-fact-P_C"/>
</dbReference>
<dbReference type="InterPro" id="IPR012340">
    <property type="entry name" value="NA-bd_OB-fold"/>
</dbReference>
<dbReference type="InterPro" id="IPR014722">
    <property type="entry name" value="Rib_uL2_dom2"/>
</dbReference>
<dbReference type="InterPro" id="IPR020599">
    <property type="entry name" value="Transl_elong_fac_P/YeiP"/>
</dbReference>
<dbReference type="InterPro" id="IPR013185">
    <property type="entry name" value="Transl_elong_KOW-like"/>
</dbReference>
<dbReference type="InterPro" id="IPR011897">
    <property type="entry name" value="Transl_elong_p-like_YeiP"/>
</dbReference>
<dbReference type="InterPro" id="IPR001059">
    <property type="entry name" value="Transl_elong_P/YeiP_cen"/>
</dbReference>
<dbReference type="InterPro" id="IPR013852">
    <property type="entry name" value="Transl_elong_P/YeiP_CS"/>
</dbReference>
<dbReference type="InterPro" id="IPR008991">
    <property type="entry name" value="Translation_prot_SH3-like_sf"/>
</dbReference>
<dbReference type="NCBIfam" id="NF001810">
    <property type="entry name" value="PRK00529.1"/>
    <property type="match status" value="1"/>
</dbReference>
<dbReference type="NCBIfam" id="NF003392">
    <property type="entry name" value="PRK04542.1"/>
    <property type="match status" value="1"/>
</dbReference>
<dbReference type="NCBIfam" id="TIGR02178">
    <property type="entry name" value="yeiP"/>
    <property type="match status" value="1"/>
</dbReference>
<dbReference type="PANTHER" id="PTHR30053">
    <property type="entry name" value="ELONGATION FACTOR P"/>
    <property type="match status" value="1"/>
</dbReference>
<dbReference type="PANTHER" id="PTHR30053:SF14">
    <property type="entry name" value="TRANSLATION ELONGATION FACTOR KOW-LIKE DOMAIN-CONTAINING PROTEIN"/>
    <property type="match status" value="1"/>
</dbReference>
<dbReference type="Pfam" id="PF01132">
    <property type="entry name" value="EFP"/>
    <property type="match status" value="1"/>
</dbReference>
<dbReference type="Pfam" id="PF08207">
    <property type="entry name" value="EFP_N"/>
    <property type="match status" value="1"/>
</dbReference>
<dbReference type="Pfam" id="PF09285">
    <property type="entry name" value="Elong-fact-P_C"/>
    <property type="match status" value="1"/>
</dbReference>
<dbReference type="PIRSF" id="PIRSF005901">
    <property type="entry name" value="EF-P"/>
    <property type="match status" value="1"/>
</dbReference>
<dbReference type="SMART" id="SM01185">
    <property type="entry name" value="EFP"/>
    <property type="match status" value="1"/>
</dbReference>
<dbReference type="SMART" id="SM00841">
    <property type="entry name" value="Elong-fact-P_C"/>
    <property type="match status" value="1"/>
</dbReference>
<dbReference type="SUPFAM" id="SSF50249">
    <property type="entry name" value="Nucleic acid-binding proteins"/>
    <property type="match status" value="2"/>
</dbReference>
<dbReference type="SUPFAM" id="SSF50104">
    <property type="entry name" value="Translation proteins SH3-like domain"/>
    <property type="match status" value="1"/>
</dbReference>
<dbReference type="PROSITE" id="PS01275">
    <property type="entry name" value="EFP"/>
    <property type="match status" value="1"/>
</dbReference>
<comment type="similarity">
    <text evidence="1">Belongs to the elongation factor P family.</text>
</comment>
<comment type="sequence caution" evidence="2">
    <conflict type="erroneous initiation">
        <sequence resource="EMBL-CDS" id="AAF94368"/>
    </conflict>
</comment>
<accession>Q9KSP7</accession>
<sequence length="188" mass="20898">MPKASELKKGFAIISNGKTLLIKDIEVTTPGGRGGSKIYKLRCTDLNTGARVDERYKSDDVLDTVEMNKRPISFSYIDGDEYVFMNNDDYTPYNFKKDEIEDELLFITEEIQGMSVVLVDGEAVAIELPSSVEMVIEETDPSIKGASASSRTKPARMPTGLVVQVPEYIATGDRIVINTAERKFMNRA</sequence>
<gene>
    <name type="ordered locus">VC_1209</name>
</gene>
<proteinExistence type="inferred from homology"/>